<protein>
    <recommendedName>
        <fullName evidence="1">Cytoplasmic envelopment protein 1</fullName>
    </recommendedName>
</protein>
<evidence type="ECO:0000255" key="1">
    <source>
        <dbReference type="HAMAP-Rule" id="MF_04038"/>
    </source>
</evidence>
<evidence type="ECO:0000305" key="2"/>
<evidence type="ECO:0000312" key="3">
    <source>
        <dbReference type="EMBL" id="AAS45939.1"/>
    </source>
</evidence>
<gene>
    <name type="ordered locus">55</name>
</gene>
<comment type="function">
    <text evidence="1">Plays a critical role in cytoplasmic virus egress. Participates in the final step of tegumentation and envelope acquisition within the host cytoplasm.</text>
</comment>
<comment type="subcellular location">
    <subcellularLocation>
        <location evidence="1">Virion</location>
    </subcellularLocation>
    <subcellularLocation>
        <location evidence="1">Virion tegument</location>
    </subcellularLocation>
    <subcellularLocation>
        <location evidence="1">Host cytoplasm</location>
    </subcellularLocation>
    <subcellularLocation>
        <location evidence="1">Host Golgi apparatus</location>
    </subcellularLocation>
</comment>
<comment type="similarity">
    <text evidence="1">Belongs to the herpesviridae cytoplasmic envelopment protein 1 family.</text>
</comment>
<name>CEP1_EHV1V</name>
<dbReference type="EMBL" id="AY464052">
    <property type="protein sequence ID" value="AAS45939.1"/>
    <property type="molecule type" value="Genomic_DNA"/>
</dbReference>
<dbReference type="SMR" id="P84459"/>
<dbReference type="KEGG" id="vg:2948583"/>
<dbReference type="Proteomes" id="UP000008296">
    <property type="component" value="Segment"/>
</dbReference>
<dbReference type="GO" id="GO:0044177">
    <property type="term" value="C:host cell Golgi apparatus"/>
    <property type="evidence" value="ECO:0007669"/>
    <property type="project" value="UniProtKB-SubCell"/>
</dbReference>
<dbReference type="GO" id="GO:0019033">
    <property type="term" value="C:viral tegument"/>
    <property type="evidence" value="ECO:0007669"/>
    <property type="project" value="UniProtKB-SubCell"/>
</dbReference>
<dbReference type="HAMAP" id="MF_04038">
    <property type="entry name" value="HSV_CEP1"/>
    <property type="match status" value="1"/>
</dbReference>
<dbReference type="InterPro" id="IPR002600">
    <property type="entry name" value="Herpes_UL7"/>
</dbReference>
<dbReference type="Pfam" id="PF01677">
    <property type="entry name" value="Herpes_UL7"/>
    <property type="match status" value="1"/>
</dbReference>
<feature type="chain" id="PRO_0000115917" description="Cytoplasmic envelopment protein 1">
    <location>
        <begin position="1"/>
        <end position="303"/>
    </location>
</feature>
<keyword id="KW-1035">Host cytoplasm</keyword>
<keyword id="KW-1040">Host Golgi apparatus</keyword>
<keyword id="KW-0946">Virion</keyword>
<keyword id="KW-0920">Virion tegument</keyword>
<accession>P84459</accession>
<accession>Q6S6U9</accession>
<sequence length="303" mass="33854">MSATMRAEIDPLAHSATVDEMVEAITKGDDSVTTIVDDLVWHATPRFVTEVREVPGLPPSFTTTSVTDMRVDASSEKLMLTLDGQEGSEISCETYMRSCLDLPAFKGFSLFVVTPLEDRVNVLGVAPVILSHRLVLYRPTDLIDFTLCIIQMYLENCSTKRATSSLFVQIECILRNISKTITPLLKMRRLMYIGATWTLNTLMCVTNHNPFDQARVLPNYMMAKMLLGQKSNTPAILDAIYSAGYRQTLSKRPITPCPSGVLRCNKAHLNAPLCTKVVADTLYSWWTATDEKPVPESIYVLYD</sequence>
<organismHost>
    <name type="scientific">Equus caballus</name>
    <name type="common">Horse</name>
    <dbReference type="NCBI Taxonomy" id="9796"/>
</organismHost>
<organism>
    <name type="scientific">Equine herpesvirus 1 (strain V592)</name>
    <name type="common">EHV-1</name>
    <name type="synonym">Equine abortion virus</name>
    <dbReference type="NCBI Taxonomy" id="310273"/>
    <lineage>
        <taxon>Viruses</taxon>
        <taxon>Duplodnaviria</taxon>
        <taxon>Heunggongvirae</taxon>
        <taxon>Peploviricota</taxon>
        <taxon>Herviviricetes</taxon>
        <taxon>Herpesvirales</taxon>
        <taxon>Orthoherpesviridae</taxon>
        <taxon>Alphaherpesvirinae</taxon>
        <taxon>Varicellovirus</taxon>
        <taxon>Varicellovirus equidalpha1</taxon>
        <taxon>Equid alphaherpesvirus 1</taxon>
    </lineage>
</organism>
<reference evidence="2 3" key="1">
    <citation type="submission" date="2003-11" db="EMBL/GenBank/DDBJ databases">
        <authorList>
            <person name="Davis-Poynter N."/>
            <person name="Nugent J."/>
            <person name="Birch-Machin I."/>
            <person name="Allen G.P."/>
        </authorList>
    </citation>
    <scope>NUCLEOTIDE SEQUENCE [LARGE SCALE GENOMIC DNA]</scope>
</reference>
<proteinExistence type="inferred from homology"/>